<dbReference type="EMBL" id="CP000127">
    <property type="protein sequence ID" value="ABA57366.1"/>
    <property type="molecule type" value="Genomic_DNA"/>
</dbReference>
<dbReference type="RefSeq" id="WP_002809146.1">
    <property type="nucleotide sequence ID" value="NC_007484.1"/>
</dbReference>
<dbReference type="SMR" id="Q3JCT0"/>
<dbReference type="FunCoup" id="Q3JCT0">
    <property type="interactions" value="54"/>
</dbReference>
<dbReference type="STRING" id="323261.Noc_0853"/>
<dbReference type="KEGG" id="noc:Noc_0853"/>
<dbReference type="eggNOG" id="COG2919">
    <property type="taxonomic scope" value="Bacteria"/>
</dbReference>
<dbReference type="HOGENOM" id="CLU_134863_5_1_6"/>
<dbReference type="InParanoid" id="Q3JCT0"/>
<dbReference type="Proteomes" id="UP000006838">
    <property type="component" value="Chromosome"/>
</dbReference>
<dbReference type="GO" id="GO:0032153">
    <property type="term" value="C:cell division site"/>
    <property type="evidence" value="ECO:0007669"/>
    <property type="project" value="UniProtKB-UniRule"/>
</dbReference>
<dbReference type="GO" id="GO:0030428">
    <property type="term" value="C:cell septum"/>
    <property type="evidence" value="ECO:0007669"/>
    <property type="project" value="TreeGrafter"/>
</dbReference>
<dbReference type="GO" id="GO:0005886">
    <property type="term" value="C:plasma membrane"/>
    <property type="evidence" value="ECO:0007669"/>
    <property type="project" value="UniProtKB-SubCell"/>
</dbReference>
<dbReference type="GO" id="GO:0043093">
    <property type="term" value="P:FtsZ-dependent cytokinesis"/>
    <property type="evidence" value="ECO:0007669"/>
    <property type="project" value="UniProtKB-UniRule"/>
</dbReference>
<dbReference type="HAMAP" id="MF_00599">
    <property type="entry name" value="FtsB"/>
    <property type="match status" value="1"/>
</dbReference>
<dbReference type="InterPro" id="IPR023081">
    <property type="entry name" value="Cell_div_FtsB"/>
</dbReference>
<dbReference type="InterPro" id="IPR007060">
    <property type="entry name" value="FtsL/DivIC"/>
</dbReference>
<dbReference type="NCBIfam" id="NF002058">
    <property type="entry name" value="PRK00888.1"/>
    <property type="match status" value="1"/>
</dbReference>
<dbReference type="PANTHER" id="PTHR37485">
    <property type="entry name" value="CELL DIVISION PROTEIN FTSB"/>
    <property type="match status" value="1"/>
</dbReference>
<dbReference type="PANTHER" id="PTHR37485:SF1">
    <property type="entry name" value="CELL DIVISION PROTEIN FTSB"/>
    <property type="match status" value="1"/>
</dbReference>
<dbReference type="Pfam" id="PF04977">
    <property type="entry name" value="DivIC"/>
    <property type="match status" value="1"/>
</dbReference>
<accession>Q3JCT0</accession>
<comment type="function">
    <text evidence="1">Essential cell division protein. May link together the upstream cell division proteins, which are predominantly cytoplasmic, with the downstream cell division proteins, which are predominantly periplasmic.</text>
</comment>
<comment type="subunit">
    <text evidence="1">Part of a complex composed of FtsB, FtsL and FtsQ.</text>
</comment>
<comment type="subcellular location">
    <subcellularLocation>
        <location evidence="1">Cell inner membrane</location>
        <topology evidence="1">Single-pass type II membrane protein</topology>
    </subcellularLocation>
    <text evidence="1">Localizes to the division septum.</text>
</comment>
<comment type="similarity">
    <text evidence="1">Belongs to the FtsB family.</text>
</comment>
<evidence type="ECO:0000255" key="1">
    <source>
        <dbReference type="HAMAP-Rule" id="MF_00599"/>
    </source>
</evidence>
<feature type="chain" id="PRO_1000025711" description="Cell division protein FtsB">
    <location>
        <begin position="1"/>
        <end position="91"/>
    </location>
</feature>
<feature type="topological domain" description="Cytoplasmic" evidence="1">
    <location>
        <begin position="1"/>
        <end position="3"/>
    </location>
</feature>
<feature type="transmembrane region" description="Helical" evidence="1">
    <location>
        <begin position="4"/>
        <end position="21"/>
    </location>
</feature>
<feature type="topological domain" description="Periplasmic" evidence="1">
    <location>
        <begin position="22"/>
        <end position="91"/>
    </location>
</feature>
<feature type="coiled-coil region" evidence="1">
    <location>
        <begin position="26"/>
        <end position="74"/>
    </location>
</feature>
<reference key="1">
    <citation type="journal article" date="2006" name="Appl. Environ. Microbiol.">
        <title>Complete genome sequence of the marine, chemolithoautotrophic, ammonia-oxidizing bacterium Nitrosococcus oceani ATCC 19707.</title>
        <authorList>
            <person name="Klotz M.G."/>
            <person name="Arp D.J."/>
            <person name="Chain P.S.G."/>
            <person name="El-Sheikh A.F."/>
            <person name="Hauser L.J."/>
            <person name="Hommes N.G."/>
            <person name="Larimer F.W."/>
            <person name="Malfatti S.A."/>
            <person name="Norton J.M."/>
            <person name="Poret-Peterson A.T."/>
            <person name="Vergez L.M."/>
            <person name="Ward B.B."/>
        </authorList>
    </citation>
    <scope>NUCLEOTIDE SEQUENCE [LARGE SCALE GENOMIC DNA]</scope>
    <source>
        <strain>ATCC 19707 / BCRC 17464 / JCM 30415 / NCIMB 11848 / C-107</strain>
    </source>
</reference>
<organism>
    <name type="scientific">Nitrosococcus oceani (strain ATCC 19707 / BCRC 17464 / JCM 30415 / NCIMB 11848 / C-107)</name>
    <dbReference type="NCBI Taxonomy" id="323261"/>
    <lineage>
        <taxon>Bacteria</taxon>
        <taxon>Pseudomonadati</taxon>
        <taxon>Pseudomonadota</taxon>
        <taxon>Gammaproteobacteria</taxon>
        <taxon>Chromatiales</taxon>
        <taxon>Chromatiaceae</taxon>
        <taxon>Nitrosococcus</taxon>
    </lineage>
</organism>
<name>FTSB_NITOC</name>
<protein>
    <recommendedName>
        <fullName evidence="1">Cell division protein FtsB</fullName>
    </recommendedName>
</protein>
<proteinExistence type="inferred from homology"/>
<keyword id="KW-0131">Cell cycle</keyword>
<keyword id="KW-0132">Cell division</keyword>
<keyword id="KW-0997">Cell inner membrane</keyword>
<keyword id="KW-1003">Cell membrane</keyword>
<keyword id="KW-0175">Coiled coil</keyword>
<keyword id="KW-0472">Membrane</keyword>
<keyword id="KW-1185">Reference proteome</keyword>
<keyword id="KW-0812">Transmembrane</keyword>
<keyword id="KW-1133">Transmembrane helix</keyword>
<gene>
    <name evidence="1" type="primary">ftsB</name>
    <name type="ordered locus">Noc_0853</name>
</gene>
<sequence length="91" mass="10377">MKFIVGLLLVLLLALQYQLWISKDGLGELRQLSRSIKQQRHENATLIERNQVLKAEVQDLKSGLDALEERARSGLGMIKQGETFFQVVEEP</sequence>